<feature type="chain" id="PRO_0000095526" description="Glutamate racemase 1">
    <location>
        <begin position="1"/>
        <end position="266"/>
    </location>
</feature>
<feature type="active site" description="Proton donor/acceptor" evidence="1">
    <location>
        <position position="74"/>
    </location>
</feature>
<feature type="active site" description="Proton donor/acceptor" evidence="1">
    <location>
        <position position="182"/>
    </location>
</feature>
<feature type="binding site" evidence="1">
    <location>
        <begin position="11"/>
        <end position="12"/>
    </location>
    <ligand>
        <name>substrate</name>
    </ligand>
</feature>
<feature type="binding site" evidence="1">
    <location>
        <begin position="43"/>
        <end position="44"/>
    </location>
    <ligand>
        <name>substrate</name>
    </ligand>
</feature>
<feature type="binding site" evidence="1">
    <location>
        <begin position="75"/>
        <end position="76"/>
    </location>
    <ligand>
        <name>substrate</name>
    </ligand>
</feature>
<feature type="binding site" evidence="1">
    <location>
        <begin position="183"/>
        <end position="184"/>
    </location>
    <ligand>
        <name>substrate</name>
    </ligand>
</feature>
<keyword id="KW-0133">Cell shape</keyword>
<keyword id="KW-0961">Cell wall biogenesis/degradation</keyword>
<keyword id="KW-0413">Isomerase</keyword>
<keyword id="KW-0573">Peptidoglycan synthesis</keyword>
<keyword id="KW-1185">Reference proteome</keyword>
<accession>Q8RD38</accession>
<evidence type="ECO:0000255" key="1">
    <source>
        <dbReference type="HAMAP-Rule" id="MF_00258"/>
    </source>
</evidence>
<gene>
    <name evidence="1" type="primary">murI1</name>
    <name type="ordered locus">TTE0209</name>
</gene>
<sequence>MDKNGPIGIIDSGVGGITVLKRLLEILPEEDYIYFGDTLRVPYGNRPKEEIEKFTREIVNYLKKQKVKAVVIACNTICSSINKNDYEILMFGILEAGIKSAVEATSNGRIGVIATKRTVESEAYLKGIKRLNRNAMVFQKACPELVLIVENGFYEASSIYSAVKKCTEEFLEKDIDTLVLGCTHFPILLPFIERVVDNKVTVVDPAIKLAHEVKKYLVENNLVKDKKGGQIRFLVTGEKENFIKVAGTFLNDKHIDVLRIAIEELK</sequence>
<organism>
    <name type="scientific">Caldanaerobacter subterraneus subsp. tengcongensis (strain DSM 15242 / JCM 11007 / NBRC 100824 / MB4)</name>
    <name type="common">Thermoanaerobacter tengcongensis</name>
    <dbReference type="NCBI Taxonomy" id="273068"/>
    <lineage>
        <taxon>Bacteria</taxon>
        <taxon>Bacillati</taxon>
        <taxon>Bacillota</taxon>
        <taxon>Clostridia</taxon>
        <taxon>Thermoanaerobacterales</taxon>
        <taxon>Thermoanaerobacteraceae</taxon>
        <taxon>Caldanaerobacter</taxon>
    </lineage>
</organism>
<name>MURI1_CALS4</name>
<dbReference type="EC" id="5.1.1.3" evidence="1"/>
<dbReference type="EMBL" id="AE008691">
    <property type="protein sequence ID" value="AAM23510.1"/>
    <property type="molecule type" value="Genomic_DNA"/>
</dbReference>
<dbReference type="RefSeq" id="WP_011024704.1">
    <property type="nucleotide sequence ID" value="NC_003869.1"/>
</dbReference>
<dbReference type="SMR" id="Q8RD38"/>
<dbReference type="STRING" id="273068.TTE0209"/>
<dbReference type="KEGG" id="tte:TTE0209"/>
<dbReference type="eggNOG" id="COG0796">
    <property type="taxonomic scope" value="Bacteria"/>
</dbReference>
<dbReference type="HOGENOM" id="CLU_052344_0_2_9"/>
<dbReference type="OrthoDB" id="9801055at2"/>
<dbReference type="UniPathway" id="UPA00219"/>
<dbReference type="Proteomes" id="UP000000555">
    <property type="component" value="Chromosome"/>
</dbReference>
<dbReference type="GO" id="GO:0008881">
    <property type="term" value="F:glutamate racemase activity"/>
    <property type="evidence" value="ECO:0007669"/>
    <property type="project" value="UniProtKB-UniRule"/>
</dbReference>
<dbReference type="GO" id="GO:0071555">
    <property type="term" value="P:cell wall organization"/>
    <property type="evidence" value="ECO:0007669"/>
    <property type="project" value="UniProtKB-KW"/>
</dbReference>
<dbReference type="GO" id="GO:0009252">
    <property type="term" value="P:peptidoglycan biosynthetic process"/>
    <property type="evidence" value="ECO:0007669"/>
    <property type="project" value="UniProtKB-UniRule"/>
</dbReference>
<dbReference type="GO" id="GO:0008360">
    <property type="term" value="P:regulation of cell shape"/>
    <property type="evidence" value="ECO:0007669"/>
    <property type="project" value="UniProtKB-KW"/>
</dbReference>
<dbReference type="FunFam" id="3.40.50.1860:FF:000001">
    <property type="entry name" value="Glutamate racemase"/>
    <property type="match status" value="1"/>
</dbReference>
<dbReference type="Gene3D" id="3.40.50.1860">
    <property type="match status" value="2"/>
</dbReference>
<dbReference type="HAMAP" id="MF_00258">
    <property type="entry name" value="Glu_racemase"/>
    <property type="match status" value="1"/>
</dbReference>
<dbReference type="InterPro" id="IPR015942">
    <property type="entry name" value="Asp/Glu/hydantoin_racemase"/>
</dbReference>
<dbReference type="InterPro" id="IPR001920">
    <property type="entry name" value="Asp/Glu_race"/>
</dbReference>
<dbReference type="InterPro" id="IPR033134">
    <property type="entry name" value="Asp/Glu_racemase_AS_2"/>
</dbReference>
<dbReference type="InterPro" id="IPR004391">
    <property type="entry name" value="Glu_race"/>
</dbReference>
<dbReference type="NCBIfam" id="TIGR00067">
    <property type="entry name" value="glut_race"/>
    <property type="match status" value="1"/>
</dbReference>
<dbReference type="PANTHER" id="PTHR21198">
    <property type="entry name" value="GLUTAMATE RACEMASE"/>
    <property type="match status" value="1"/>
</dbReference>
<dbReference type="PANTHER" id="PTHR21198:SF2">
    <property type="entry name" value="GLUTAMATE RACEMASE"/>
    <property type="match status" value="1"/>
</dbReference>
<dbReference type="Pfam" id="PF01177">
    <property type="entry name" value="Asp_Glu_race"/>
    <property type="match status" value="1"/>
</dbReference>
<dbReference type="SUPFAM" id="SSF53681">
    <property type="entry name" value="Aspartate/glutamate racemase"/>
    <property type="match status" value="2"/>
</dbReference>
<dbReference type="PROSITE" id="PS00924">
    <property type="entry name" value="ASP_GLU_RACEMASE_2"/>
    <property type="match status" value="1"/>
</dbReference>
<reference key="1">
    <citation type="journal article" date="2002" name="Genome Res.">
        <title>A complete sequence of the T. tengcongensis genome.</title>
        <authorList>
            <person name="Bao Q."/>
            <person name="Tian Y."/>
            <person name="Li W."/>
            <person name="Xu Z."/>
            <person name="Xuan Z."/>
            <person name="Hu S."/>
            <person name="Dong W."/>
            <person name="Yang J."/>
            <person name="Chen Y."/>
            <person name="Xue Y."/>
            <person name="Xu Y."/>
            <person name="Lai X."/>
            <person name="Huang L."/>
            <person name="Dong X."/>
            <person name="Ma Y."/>
            <person name="Ling L."/>
            <person name="Tan H."/>
            <person name="Chen R."/>
            <person name="Wang J."/>
            <person name="Yu J."/>
            <person name="Yang H."/>
        </authorList>
    </citation>
    <scope>NUCLEOTIDE SEQUENCE [LARGE SCALE GENOMIC DNA]</scope>
    <source>
        <strain>DSM 15242 / JCM 11007 / NBRC 100824 / MB4</strain>
    </source>
</reference>
<comment type="function">
    <text evidence="1">Provides the (R)-glutamate required for cell wall biosynthesis.</text>
</comment>
<comment type="catalytic activity">
    <reaction evidence="1">
        <text>L-glutamate = D-glutamate</text>
        <dbReference type="Rhea" id="RHEA:12813"/>
        <dbReference type="ChEBI" id="CHEBI:29985"/>
        <dbReference type="ChEBI" id="CHEBI:29986"/>
        <dbReference type="EC" id="5.1.1.3"/>
    </reaction>
</comment>
<comment type="pathway">
    <text evidence="1">Cell wall biogenesis; peptidoglycan biosynthesis.</text>
</comment>
<comment type="similarity">
    <text evidence="1">Belongs to the aspartate/glutamate racemases family.</text>
</comment>
<protein>
    <recommendedName>
        <fullName evidence="1">Glutamate racemase 1</fullName>
        <ecNumber evidence="1">5.1.1.3</ecNumber>
    </recommendedName>
</protein>
<proteinExistence type="inferred from homology"/>